<sequence length="148" mass="15256">MFDVTLLILLGLAALGFISHNTTVAVSILVLIIVRVTPLSTFFPWIEKQGLSIGIIILTIGVMAPIASGTLPPSTLIHSFLNWKSLVAIAVGVIVSWLGGRGVTLMGSQPQLVAGLLVGTVLGVALFRGVPVGPLIAAGLVSLIVGKQ</sequence>
<dbReference type="EMBL" id="CU928162">
    <property type="protein sequence ID" value="CAR08187.2"/>
    <property type="molecule type" value="Genomic_DNA"/>
</dbReference>
<dbReference type="RefSeq" id="WP_000460707.1">
    <property type="nucleotide sequence ID" value="NC_011745.1"/>
</dbReference>
<dbReference type="KEGG" id="ecq:ECED1_1995"/>
<dbReference type="HOGENOM" id="CLU_125889_0_0_6"/>
<dbReference type="Proteomes" id="UP000000748">
    <property type="component" value="Chromosome"/>
</dbReference>
<dbReference type="GO" id="GO:0005886">
    <property type="term" value="C:plasma membrane"/>
    <property type="evidence" value="ECO:0007669"/>
    <property type="project" value="UniProtKB-SubCell"/>
</dbReference>
<dbReference type="HAMAP" id="MF_01874">
    <property type="entry name" value="UPF0756"/>
    <property type="match status" value="1"/>
</dbReference>
<dbReference type="InterPro" id="IPR007382">
    <property type="entry name" value="UPF0756_TM"/>
</dbReference>
<dbReference type="PANTHER" id="PTHR38452">
    <property type="entry name" value="UPF0756 MEMBRANE PROTEIN YEAL"/>
    <property type="match status" value="1"/>
</dbReference>
<dbReference type="PANTHER" id="PTHR38452:SF1">
    <property type="entry name" value="UPF0756 MEMBRANE PROTEIN YEAL"/>
    <property type="match status" value="1"/>
</dbReference>
<dbReference type="Pfam" id="PF04284">
    <property type="entry name" value="DUF441"/>
    <property type="match status" value="1"/>
</dbReference>
<proteinExistence type="inferred from homology"/>
<accession>B7MVS1</accession>
<organism>
    <name type="scientific">Escherichia coli O81 (strain ED1a)</name>
    <dbReference type="NCBI Taxonomy" id="585397"/>
    <lineage>
        <taxon>Bacteria</taxon>
        <taxon>Pseudomonadati</taxon>
        <taxon>Pseudomonadota</taxon>
        <taxon>Gammaproteobacteria</taxon>
        <taxon>Enterobacterales</taxon>
        <taxon>Enterobacteriaceae</taxon>
        <taxon>Escherichia</taxon>
    </lineage>
</organism>
<gene>
    <name evidence="1" type="primary">yeaL</name>
    <name type="ordered locus">ECED1_1995</name>
</gene>
<feature type="chain" id="PRO_0000388872" description="UPF0756 membrane protein YeaL">
    <location>
        <begin position="1"/>
        <end position="148"/>
    </location>
</feature>
<feature type="transmembrane region" description="Helical" evidence="1">
    <location>
        <begin position="14"/>
        <end position="34"/>
    </location>
</feature>
<feature type="transmembrane region" description="Helical" evidence="1">
    <location>
        <begin position="51"/>
        <end position="71"/>
    </location>
</feature>
<feature type="transmembrane region" description="Helical" evidence="1">
    <location>
        <begin position="86"/>
        <end position="106"/>
    </location>
</feature>
<feature type="transmembrane region" description="Helical" evidence="1">
    <location>
        <begin position="121"/>
        <end position="141"/>
    </location>
</feature>
<keyword id="KW-1003">Cell membrane</keyword>
<keyword id="KW-0472">Membrane</keyword>
<keyword id="KW-0812">Transmembrane</keyword>
<keyword id="KW-1133">Transmembrane helix</keyword>
<protein>
    <recommendedName>
        <fullName evidence="1">UPF0756 membrane protein YeaL</fullName>
    </recommendedName>
</protein>
<reference key="1">
    <citation type="journal article" date="2009" name="PLoS Genet.">
        <title>Organised genome dynamics in the Escherichia coli species results in highly diverse adaptive paths.</title>
        <authorList>
            <person name="Touchon M."/>
            <person name="Hoede C."/>
            <person name="Tenaillon O."/>
            <person name="Barbe V."/>
            <person name="Baeriswyl S."/>
            <person name="Bidet P."/>
            <person name="Bingen E."/>
            <person name="Bonacorsi S."/>
            <person name="Bouchier C."/>
            <person name="Bouvet O."/>
            <person name="Calteau A."/>
            <person name="Chiapello H."/>
            <person name="Clermont O."/>
            <person name="Cruveiller S."/>
            <person name="Danchin A."/>
            <person name="Diard M."/>
            <person name="Dossat C."/>
            <person name="Karoui M.E."/>
            <person name="Frapy E."/>
            <person name="Garry L."/>
            <person name="Ghigo J.M."/>
            <person name="Gilles A.M."/>
            <person name="Johnson J."/>
            <person name="Le Bouguenec C."/>
            <person name="Lescat M."/>
            <person name="Mangenot S."/>
            <person name="Martinez-Jehanne V."/>
            <person name="Matic I."/>
            <person name="Nassif X."/>
            <person name="Oztas S."/>
            <person name="Petit M.A."/>
            <person name="Pichon C."/>
            <person name="Rouy Z."/>
            <person name="Ruf C.S."/>
            <person name="Schneider D."/>
            <person name="Tourret J."/>
            <person name="Vacherie B."/>
            <person name="Vallenet D."/>
            <person name="Medigue C."/>
            <person name="Rocha E.P.C."/>
            <person name="Denamur E."/>
        </authorList>
    </citation>
    <scope>NUCLEOTIDE SEQUENCE [LARGE SCALE GENOMIC DNA]</scope>
    <source>
        <strain>ED1a</strain>
    </source>
</reference>
<name>YEAL_ECO81</name>
<comment type="subcellular location">
    <subcellularLocation>
        <location evidence="1">Cell membrane</location>
        <topology evidence="1">Multi-pass membrane protein</topology>
    </subcellularLocation>
</comment>
<comment type="similarity">
    <text evidence="1">Belongs to the UPF0756 family.</text>
</comment>
<evidence type="ECO:0000255" key="1">
    <source>
        <dbReference type="HAMAP-Rule" id="MF_01874"/>
    </source>
</evidence>